<feature type="chain" id="PRO_0000319780" description="Histidinol-phosphate aminotransferase">
    <location>
        <begin position="1"/>
        <end position="373"/>
    </location>
</feature>
<feature type="region of interest" description="Disordered" evidence="2">
    <location>
        <begin position="1"/>
        <end position="45"/>
    </location>
</feature>
<feature type="compositionally biased region" description="Polar residues" evidence="2">
    <location>
        <begin position="1"/>
        <end position="10"/>
    </location>
</feature>
<feature type="modified residue" description="N6-(pyridoxal phosphate)lysine" evidence="1">
    <location>
        <position position="237"/>
    </location>
</feature>
<keyword id="KW-0028">Amino-acid biosynthesis</keyword>
<keyword id="KW-0032">Aminotransferase</keyword>
<keyword id="KW-0368">Histidine biosynthesis</keyword>
<keyword id="KW-0663">Pyridoxal phosphate</keyword>
<keyword id="KW-0808">Transferase</keyword>
<organism>
    <name type="scientific">Mycolicibacterium vanbaalenii (strain DSM 7251 / JCM 13017 / BCRC 16820 / KCTC 9966 / NRRL B-24157 / PYR-1)</name>
    <name type="common">Mycobacterium vanbaalenii</name>
    <dbReference type="NCBI Taxonomy" id="350058"/>
    <lineage>
        <taxon>Bacteria</taxon>
        <taxon>Bacillati</taxon>
        <taxon>Actinomycetota</taxon>
        <taxon>Actinomycetes</taxon>
        <taxon>Mycobacteriales</taxon>
        <taxon>Mycobacteriaceae</taxon>
        <taxon>Mycolicibacterium</taxon>
    </lineage>
</organism>
<accession>A1T8W2</accession>
<reference key="1">
    <citation type="submission" date="2006-12" db="EMBL/GenBank/DDBJ databases">
        <title>Complete sequence of Mycobacterium vanbaalenii PYR-1.</title>
        <authorList>
            <consortium name="US DOE Joint Genome Institute"/>
            <person name="Copeland A."/>
            <person name="Lucas S."/>
            <person name="Lapidus A."/>
            <person name="Barry K."/>
            <person name="Detter J.C."/>
            <person name="Glavina del Rio T."/>
            <person name="Hammon N."/>
            <person name="Israni S."/>
            <person name="Dalin E."/>
            <person name="Tice H."/>
            <person name="Pitluck S."/>
            <person name="Singan V."/>
            <person name="Schmutz J."/>
            <person name="Larimer F."/>
            <person name="Land M."/>
            <person name="Hauser L."/>
            <person name="Kyrpides N."/>
            <person name="Anderson I.J."/>
            <person name="Miller C."/>
            <person name="Richardson P."/>
        </authorList>
    </citation>
    <scope>NUCLEOTIDE SEQUENCE [LARGE SCALE GENOMIC DNA]</scope>
    <source>
        <strain>DSM 7251 / JCM 13017 / BCRC 16820 / KCTC 9966 / NRRL B-24157 / PYR-1</strain>
    </source>
</reference>
<evidence type="ECO:0000255" key="1">
    <source>
        <dbReference type="HAMAP-Rule" id="MF_01023"/>
    </source>
</evidence>
<evidence type="ECO:0000256" key="2">
    <source>
        <dbReference type="SAM" id="MobiDB-lite"/>
    </source>
</evidence>
<proteinExistence type="inferred from homology"/>
<dbReference type="EC" id="2.6.1.9" evidence="1"/>
<dbReference type="EMBL" id="CP000511">
    <property type="protein sequence ID" value="ABM13612.1"/>
    <property type="molecule type" value="Genomic_DNA"/>
</dbReference>
<dbReference type="RefSeq" id="WP_011780020.1">
    <property type="nucleotide sequence ID" value="NZ_JACKSD010000326.1"/>
</dbReference>
<dbReference type="SMR" id="A1T8W2"/>
<dbReference type="STRING" id="350058.Mvan_2805"/>
<dbReference type="KEGG" id="mva:Mvan_2805"/>
<dbReference type="eggNOG" id="COG0079">
    <property type="taxonomic scope" value="Bacteria"/>
</dbReference>
<dbReference type="HOGENOM" id="CLU_017584_3_1_11"/>
<dbReference type="UniPathway" id="UPA00031">
    <property type="reaction ID" value="UER00012"/>
</dbReference>
<dbReference type="Proteomes" id="UP000009159">
    <property type="component" value="Chromosome"/>
</dbReference>
<dbReference type="GO" id="GO:0004400">
    <property type="term" value="F:histidinol-phosphate transaminase activity"/>
    <property type="evidence" value="ECO:0007669"/>
    <property type="project" value="UniProtKB-UniRule"/>
</dbReference>
<dbReference type="GO" id="GO:0030170">
    <property type="term" value="F:pyridoxal phosphate binding"/>
    <property type="evidence" value="ECO:0007669"/>
    <property type="project" value="InterPro"/>
</dbReference>
<dbReference type="GO" id="GO:0000105">
    <property type="term" value="P:L-histidine biosynthetic process"/>
    <property type="evidence" value="ECO:0007669"/>
    <property type="project" value="UniProtKB-UniRule"/>
</dbReference>
<dbReference type="CDD" id="cd00609">
    <property type="entry name" value="AAT_like"/>
    <property type="match status" value="1"/>
</dbReference>
<dbReference type="Gene3D" id="3.90.1150.10">
    <property type="entry name" value="Aspartate Aminotransferase, domain 1"/>
    <property type="match status" value="1"/>
</dbReference>
<dbReference type="Gene3D" id="3.40.640.10">
    <property type="entry name" value="Type I PLP-dependent aspartate aminotransferase-like (Major domain)"/>
    <property type="match status" value="1"/>
</dbReference>
<dbReference type="HAMAP" id="MF_01023">
    <property type="entry name" value="HisC_aminotrans_2"/>
    <property type="match status" value="1"/>
</dbReference>
<dbReference type="InterPro" id="IPR001917">
    <property type="entry name" value="Aminotrans_II_pyridoxalP_BS"/>
</dbReference>
<dbReference type="InterPro" id="IPR004839">
    <property type="entry name" value="Aminotransferase_I/II_large"/>
</dbReference>
<dbReference type="InterPro" id="IPR005861">
    <property type="entry name" value="HisP_aminotrans"/>
</dbReference>
<dbReference type="InterPro" id="IPR015424">
    <property type="entry name" value="PyrdxlP-dep_Trfase"/>
</dbReference>
<dbReference type="InterPro" id="IPR015421">
    <property type="entry name" value="PyrdxlP-dep_Trfase_major"/>
</dbReference>
<dbReference type="InterPro" id="IPR015422">
    <property type="entry name" value="PyrdxlP-dep_Trfase_small"/>
</dbReference>
<dbReference type="NCBIfam" id="TIGR01141">
    <property type="entry name" value="hisC"/>
    <property type="match status" value="1"/>
</dbReference>
<dbReference type="NCBIfam" id="NF002877">
    <property type="entry name" value="PRK03317.1"/>
    <property type="match status" value="1"/>
</dbReference>
<dbReference type="PANTHER" id="PTHR42885:SF2">
    <property type="entry name" value="HISTIDINOL-PHOSPHATE AMINOTRANSFERASE"/>
    <property type="match status" value="1"/>
</dbReference>
<dbReference type="PANTHER" id="PTHR42885">
    <property type="entry name" value="HISTIDINOL-PHOSPHATE AMINOTRANSFERASE-RELATED"/>
    <property type="match status" value="1"/>
</dbReference>
<dbReference type="Pfam" id="PF00155">
    <property type="entry name" value="Aminotran_1_2"/>
    <property type="match status" value="1"/>
</dbReference>
<dbReference type="SUPFAM" id="SSF53383">
    <property type="entry name" value="PLP-dependent transferases"/>
    <property type="match status" value="1"/>
</dbReference>
<dbReference type="PROSITE" id="PS00599">
    <property type="entry name" value="AA_TRANSFER_CLASS_2"/>
    <property type="match status" value="1"/>
</dbReference>
<gene>
    <name evidence="1" type="primary">hisC</name>
    <name type="ordered locus">Mvan_2805</name>
</gene>
<protein>
    <recommendedName>
        <fullName evidence="1">Histidinol-phosphate aminotransferase</fullName>
        <ecNumber evidence="1">2.6.1.9</ecNumber>
    </recommendedName>
    <alternativeName>
        <fullName evidence="1">Imidazole acetol-phosphate transaminase</fullName>
    </alternativeName>
</protein>
<comment type="catalytic activity">
    <reaction evidence="1">
        <text>L-histidinol phosphate + 2-oxoglutarate = 3-(imidazol-4-yl)-2-oxopropyl phosphate + L-glutamate</text>
        <dbReference type="Rhea" id="RHEA:23744"/>
        <dbReference type="ChEBI" id="CHEBI:16810"/>
        <dbReference type="ChEBI" id="CHEBI:29985"/>
        <dbReference type="ChEBI" id="CHEBI:57766"/>
        <dbReference type="ChEBI" id="CHEBI:57980"/>
        <dbReference type="EC" id="2.6.1.9"/>
    </reaction>
</comment>
<comment type="cofactor">
    <cofactor evidence="1">
        <name>pyridoxal 5'-phosphate</name>
        <dbReference type="ChEBI" id="CHEBI:597326"/>
    </cofactor>
</comment>
<comment type="pathway">
    <text evidence="1">Amino-acid biosynthesis; L-histidine biosynthesis; L-histidine from 5-phospho-alpha-D-ribose 1-diphosphate: step 7/9.</text>
</comment>
<comment type="subunit">
    <text evidence="1">Homodimer.</text>
</comment>
<comment type="similarity">
    <text evidence="1">Belongs to the class-II pyridoxal-phosphate-dependent aminotransferase family. Histidinol-phosphate aminotransferase subfamily.</text>
</comment>
<sequence length="373" mass="39503">MTGVPGSSITLDDLPLRDDLRGKSPYGAPQLSVPVRLNTNENPHPPTRALIDDVAQSVREVAGELHRYPDRDAVALRTDLAAYLSAQTGTAVGVENVWAANGSNEILQQLLQAFGGPGRSALGFVPSYSMHPIISDGTQTRWLVANRGDDFGLDAAVAATAIKEHTPDVVFVTSPNNPSGQSVSLDDLRLLLDALCLQDGGVMIVDEAYGEFSSQPSAIGLIESYPGKLVVTRTMSKAFAFAGGRVGYLVAAPAVIDAMLLVRLPYHLSSVTQAAARAALRHADDTLGSVATLIAERERVSQALTGMGFRVIPSDANFILFGEFADAPATWQRYLDEGVLIRDVGIPGYLRTTIGLAEENDALLAASARIGAP</sequence>
<name>HIS8_MYCVP</name>